<protein>
    <recommendedName>
        <fullName>AN1-type zinc finger protein 6</fullName>
    </recommendedName>
    <alternativeName>
        <fullName>Associated with PRK1 protein</fullName>
    </alternativeName>
    <alternativeName>
        <fullName>Zinc finger A20 domain-containing protein 3</fullName>
    </alternativeName>
</protein>
<reference key="1">
    <citation type="journal article" date="2000" name="Gene">
        <title>Cloning and characterization of AWP1, a novel protein that associates with serine/threonine kinase PRK1 in vivo.</title>
        <authorList>
            <person name="Duan W."/>
            <person name="Sun B."/>
            <person name="Li T.W."/>
            <person name="Tan B.J."/>
            <person name="Lee M.K."/>
            <person name="Teo T.S."/>
        </authorList>
    </citation>
    <scope>NUCLEOTIDE SEQUENCE [MRNA] (ISOFORM 1)</scope>
    <scope>TISSUE SPECIFICITY</scope>
    <source>
        <tissue>Uterus</tissue>
    </source>
</reference>
<reference key="2">
    <citation type="submission" date="1998-04" db="EMBL/GenBank/DDBJ databases">
        <title>A novel human gene expressed in acute promyelocytic leukemia cell line NB4.</title>
        <authorList>
            <person name="Wu J."/>
            <person name="Liu T."/>
            <person name="Zhang J."/>
            <person name="Mao M."/>
            <person name="Zhang Q."/>
            <person name="Fu G."/>
            <person name="Shen Y."/>
            <person name="Zhou J."/>
            <person name="Yu Y."/>
            <person name="Wang Z."/>
            <person name="Chen S."/>
            <person name="Chen Z."/>
        </authorList>
    </citation>
    <scope>NUCLEOTIDE SEQUENCE [LARGE SCALE MRNA] (ISOFORM 2)</scope>
</reference>
<reference key="3">
    <citation type="submission" date="2000-05" db="EMBL/GenBank/DDBJ databases">
        <authorList>
            <person name="Xu X."/>
            <person name="Yang Y."/>
            <person name="Gao G."/>
            <person name="Xiao H."/>
            <person name="Chen Z."/>
            <person name="Han Z."/>
        </authorList>
    </citation>
    <scope>NUCLEOTIDE SEQUENCE [LARGE SCALE MRNA] (ISOFORM 1)</scope>
    <source>
        <tissue>Hypothalamus</tissue>
    </source>
</reference>
<reference key="4">
    <citation type="journal article" date="2001" name="Genome Res.">
        <title>Towards a catalog of human genes and proteins: sequencing and analysis of 500 novel complete protein coding human cDNAs.</title>
        <authorList>
            <person name="Wiemann S."/>
            <person name="Weil B."/>
            <person name="Wellenreuther R."/>
            <person name="Gassenhuber J."/>
            <person name="Glassl S."/>
            <person name="Ansorge W."/>
            <person name="Boecher M."/>
            <person name="Bloecker H."/>
            <person name="Bauersachs S."/>
            <person name="Blum H."/>
            <person name="Lauber J."/>
            <person name="Duesterhoeft A."/>
            <person name="Beyer A."/>
            <person name="Koehrer K."/>
            <person name="Strack N."/>
            <person name="Mewes H.-W."/>
            <person name="Ottenwaelder B."/>
            <person name="Obermaier B."/>
            <person name="Tampe J."/>
            <person name="Heubner D."/>
            <person name="Wambutt R."/>
            <person name="Korn B."/>
            <person name="Klein M."/>
            <person name="Poustka A."/>
        </authorList>
    </citation>
    <scope>NUCLEOTIDE SEQUENCE [LARGE SCALE MRNA] (ISOFORM 1)</scope>
</reference>
<reference key="5">
    <citation type="submission" date="2004-06" db="EMBL/GenBank/DDBJ databases">
        <title>Cloning of human full open reading frames in Gateway(TM) system entry vector (pDONR201).</title>
        <authorList>
            <person name="Ebert L."/>
            <person name="Schick M."/>
            <person name="Neubert P."/>
            <person name="Schatten R."/>
            <person name="Henze S."/>
            <person name="Korn B."/>
        </authorList>
    </citation>
    <scope>NUCLEOTIDE SEQUENCE [LARGE SCALE MRNA] (ISOFORM 1)</scope>
</reference>
<reference key="6">
    <citation type="submission" date="2005-09" db="EMBL/GenBank/DDBJ databases">
        <authorList>
            <person name="Mural R.J."/>
            <person name="Istrail S."/>
            <person name="Sutton G.G."/>
            <person name="Florea L."/>
            <person name="Halpern A.L."/>
            <person name="Mobarry C.M."/>
            <person name="Lippert R."/>
            <person name="Walenz B."/>
            <person name="Shatkay H."/>
            <person name="Dew I."/>
            <person name="Miller J.R."/>
            <person name="Flanigan M.J."/>
            <person name="Edwards N.J."/>
            <person name="Bolanos R."/>
            <person name="Fasulo D."/>
            <person name="Halldorsson B.V."/>
            <person name="Hannenhalli S."/>
            <person name="Turner R."/>
            <person name="Yooseph S."/>
            <person name="Lu F."/>
            <person name="Nusskern D.R."/>
            <person name="Shue B.C."/>
            <person name="Zheng X.H."/>
            <person name="Zhong F."/>
            <person name="Delcher A.L."/>
            <person name="Huson D.H."/>
            <person name="Kravitz S.A."/>
            <person name="Mouchard L."/>
            <person name="Reinert K."/>
            <person name="Remington K.A."/>
            <person name="Clark A.G."/>
            <person name="Waterman M.S."/>
            <person name="Eichler E.E."/>
            <person name="Adams M.D."/>
            <person name="Hunkapiller M.W."/>
            <person name="Myers E.W."/>
            <person name="Venter J.C."/>
        </authorList>
    </citation>
    <scope>NUCLEOTIDE SEQUENCE [LARGE SCALE GENOMIC DNA]</scope>
</reference>
<reference key="7">
    <citation type="journal article" date="2004" name="Genome Res.">
        <title>The status, quality, and expansion of the NIH full-length cDNA project: the Mammalian Gene Collection (MGC).</title>
        <authorList>
            <consortium name="The MGC Project Team"/>
        </authorList>
    </citation>
    <scope>NUCLEOTIDE SEQUENCE [LARGE SCALE MRNA] (ISOFORM 1)</scope>
    <source>
        <tissue>Kidney</tissue>
    </source>
</reference>
<reference key="8">
    <citation type="journal article" date="2008" name="Proc. Natl. Acad. Sci. U.S.A.">
        <title>A quantitative atlas of mitotic phosphorylation.</title>
        <authorList>
            <person name="Dephoure N."/>
            <person name="Zhou C."/>
            <person name="Villen J."/>
            <person name="Beausoleil S.A."/>
            <person name="Bakalarski C.E."/>
            <person name="Elledge S.J."/>
            <person name="Gygi S.P."/>
        </authorList>
    </citation>
    <scope>IDENTIFICATION BY MASS SPECTROMETRY [LARGE SCALE ANALYSIS]</scope>
    <source>
        <tissue>Cervix carcinoma</tissue>
    </source>
</reference>
<reference key="9">
    <citation type="journal article" date="2009" name="Biochim. Biophys. Acta">
        <title>Identification of polyubiquitin binding proteins involved in NF-kappaB signaling using protein arrays.</title>
        <authorList>
            <person name="Fenner B.J."/>
            <person name="Scannell M."/>
            <person name="Prehn J.H."/>
        </authorList>
    </citation>
    <scope>FUNCTION</scope>
    <scope>INTERACTION WITH POLYUBIQUITIN</scope>
</reference>
<reference key="10">
    <citation type="journal article" date="2011" name="Int. J. Biochem. Cell Biol.">
        <title>AWP1 binds to tumor necrosis factor receptor-associated factor 2 (TRAF2) and is involved in TRAF2-mediated nuclear factor-kappaB signaling.</title>
        <authorList>
            <person name="Chang E.J."/>
            <person name="Ha J."/>
            <person name="Kang S.S."/>
            <person name="Lee Z.H."/>
            <person name="Kim H.H."/>
        </authorList>
    </citation>
    <scope>FUNCTION</scope>
    <scope>INTERACTION WITH TRAF2</scope>
</reference>
<reference key="11">
    <citation type="journal article" date="2014" name="J. Proteomics">
        <title>An enzyme assisted RP-RPLC approach for in-depth analysis of human liver phosphoproteome.</title>
        <authorList>
            <person name="Bian Y."/>
            <person name="Song C."/>
            <person name="Cheng K."/>
            <person name="Dong M."/>
            <person name="Wang F."/>
            <person name="Huang J."/>
            <person name="Sun D."/>
            <person name="Wang L."/>
            <person name="Ye M."/>
            <person name="Zou H."/>
        </authorList>
    </citation>
    <scope>PHOSPHORYLATION [LARGE SCALE ANALYSIS] AT SER-49</scope>
    <scope>IDENTIFICATION BY MASS SPECTROMETRY [LARGE SCALE ANALYSIS]</scope>
    <source>
        <tissue>Liver</tissue>
    </source>
</reference>
<evidence type="ECO:0000250" key="1"/>
<evidence type="ECO:0000250" key="2">
    <source>
        <dbReference type="UniProtKB" id="Q9DCH6"/>
    </source>
</evidence>
<evidence type="ECO:0000255" key="3">
    <source>
        <dbReference type="PROSITE-ProRule" id="PRU00449"/>
    </source>
</evidence>
<evidence type="ECO:0000255" key="4">
    <source>
        <dbReference type="PROSITE-ProRule" id="PRU00451"/>
    </source>
</evidence>
<evidence type="ECO:0000256" key="5">
    <source>
        <dbReference type="SAM" id="MobiDB-lite"/>
    </source>
</evidence>
<evidence type="ECO:0000269" key="6">
    <source>
    </source>
</evidence>
<evidence type="ECO:0000269" key="7">
    <source>
    </source>
</evidence>
<evidence type="ECO:0000269" key="8">
    <source>
    </source>
</evidence>
<evidence type="ECO:0000303" key="9">
    <source ref="2"/>
</evidence>
<evidence type="ECO:0000305" key="10"/>
<evidence type="ECO:0007744" key="11">
    <source>
    </source>
</evidence>
<gene>
    <name type="primary">ZFAND6</name>
    <name type="synonym">AWP1</name>
    <name type="synonym">ZA20D3</name>
    <name type="ORF">HT032</name>
</gene>
<organism>
    <name type="scientific">Homo sapiens</name>
    <name type="common">Human</name>
    <dbReference type="NCBI Taxonomy" id="9606"/>
    <lineage>
        <taxon>Eukaryota</taxon>
        <taxon>Metazoa</taxon>
        <taxon>Chordata</taxon>
        <taxon>Craniata</taxon>
        <taxon>Vertebrata</taxon>
        <taxon>Euteleostomi</taxon>
        <taxon>Mammalia</taxon>
        <taxon>Eutheria</taxon>
        <taxon>Euarchontoglires</taxon>
        <taxon>Primates</taxon>
        <taxon>Haplorrhini</taxon>
        <taxon>Catarrhini</taxon>
        <taxon>Hominidae</taxon>
        <taxon>Homo</taxon>
    </lineage>
</organism>
<accession>Q6FIF0</accession>
<accession>D3DW92</accession>
<accession>D3DW94</accession>
<accession>O95792</accession>
<accession>Q9BQF7</accession>
<accession>Q9GZY3</accession>
<sequence length="208" mass="22555">MAQETNHSQVPMLCSTGCGFYGNPRTNGMCSVCYKEHLQRQNSSNGRISPPATSVSSLSESLPVQCTDGSVPEAQSALDSTSSSMQPSPVSNQSLLSESVASSQLDSTSVDKAVPETEDVQASVSDTAQQPSEEQSKSLEKPKQKKNRCFMCRKKVGLTGFECRCGNVYCGVHRYSDVHNCSYNYKADAAEKIRKENPVVVGEKIQKI</sequence>
<proteinExistence type="evidence at protein level"/>
<keyword id="KW-0007">Acetylation</keyword>
<keyword id="KW-0025">Alternative splicing</keyword>
<keyword id="KW-0053">Apoptosis</keyword>
<keyword id="KW-0963">Cytoplasm</keyword>
<keyword id="KW-0479">Metal-binding</keyword>
<keyword id="KW-0597">Phosphoprotein</keyword>
<keyword id="KW-0653">Protein transport</keyword>
<keyword id="KW-1267">Proteomics identification</keyword>
<keyword id="KW-1185">Reference proteome</keyword>
<keyword id="KW-0813">Transport</keyword>
<keyword id="KW-0862">Zinc</keyword>
<keyword id="KW-0863">Zinc-finger</keyword>
<name>ZFAN6_HUMAN</name>
<comment type="function">
    <text evidence="1 7 8">Involved in regulation of TNF-alpha induced NF-kappa-B activation and apoptosis. Involved in modulation of 'Lys-48'-linked polyubiquitination status of TRAF2 and decreases association of TRAF2 with RIPK1. Required for PTS1 target sequence-dependent protein import into peroxisomes and PEX5 stability; may cooperate with PEX6. In vitro involved in PEX5 export from the cytosol to peroxisomes (By similarity).</text>
</comment>
<comment type="subunit">
    <text evidence="1">Interacts with PKN1 (By similarity). Interacts with TRAF2. Interacts with mono- and polyubiquitin. Interacts with PEX6. Interacts with PEX5 (Cys-linked ubiquitinated) (By similarity).</text>
</comment>
<comment type="interaction">
    <interactant intactId="EBI-724630">
        <id>Q6FIF0</id>
    </interactant>
    <interactant intactId="EBI-746453">
        <id>P54725</id>
        <label>RAD23A</label>
    </interactant>
    <organismsDiffer>false</organismsDiffer>
    <experiments>3</experiments>
</comment>
<comment type="interaction">
    <interactant intactId="EBI-724630">
        <id>Q6FIF0</id>
    </interactant>
    <interactant intactId="EBI-355744">
        <id>Q12933</id>
        <label>TRAF2</label>
    </interactant>
    <organismsDiffer>false</organismsDiffer>
    <experiments>8</experiments>
</comment>
<comment type="interaction">
    <interactant intactId="EBI-724630">
        <id>Q6FIF0</id>
    </interactant>
    <interactant intactId="EBI-523498">
        <id>O00463</id>
        <label>TRAF5</label>
    </interactant>
    <organismsDiffer>false</organismsDiffer>
    <experiments>3</experiments>
</comment>
<comment type="subcellular location">
    <subcellularLocation>
        <location evidence="1">Cytoplasm</location>
    </subcellularLocation>
</comment>
<comment type="alternative products">
    <event type="alternative splicing"/>
    <isoform>
        <id>Q6FIF0-1</id>
        <name>1</name>
        <sequence type="displayed"/>
    </isoform>
    <isoform>
        <id>Q6FIF0-2</id>
        <name>2</name>
        <sequence type="described" ref="VSP_019652"/>
    </isoform>
</comment>
<comment type="tissue specificity">
    <text evidence="6">Widely expressed with high level in heart, skeletal muscle, liver, kidney and placenta.</text>
</comment>
<comment type="domain">
    <text>The A20-type zinc finger domain mediates regulation of NF-kappa-B activity.</text>
</comment>
<comment type="domain">
    <text>The AN1-type zinc finger domain mediates association with TRAF2.</text>
</comment>
<comment type="sequence caution" evidence="10">
    <conflict type="frameshift">
        <sequence resource="EMBL-CDS" id="AAD17528"/>
    </conflict>
</comment>
<feature type="chain" id="PRO_0000245235" description="AN1-type zinc finger protein 6">
    <location>
        <begin position="1"/>
        <end position="208"/>
    </location>
</feature>
<feature type="zinc finger region" description="A20-type" evidence="4">
    <location>
        <begin position="8"/>
        <end position="42"/>
    </location>
</feature>
<feature type="zinc finger region" description="AN1-type" evidence="3">
    <location>
        <begin position="143"/>
        <end position="189"/>
    </location>
</feature>
<feature type="region of interest" description="Disordered" evidence="5">
    <location>
        <begin position="41"/>
        <end position="140"/>
    </location>
</feature>
<feature type="compositionally biased region" description="Polar residues" evidence="5">
    <location>
        <begin position="41"/>
        <end position="68"/>
    </location>
</feature>
<feature type="compositionally biased region" description="Low complexity" evidence="5">
    <location>
        <begin position="80"/>
        <end position="94"/>
    </location>
</feature>
<feature type="compositionally biased region" description="Polar residues" evidence="5">
    <location>
        <begin position="95"/>
        <end position="110"/>
    </location>
</feature>
<feature type="compositionally biased region" description="Polar residues" evidence="5">
    <location>
        <begin position="120"/>
        <end position="133"/>
    </location>
</feature>
<feature type="binding site" evidence="4">
    <location>
        <position position="14"/>
    </location>
    <ligand>
        <name>Zn(2+)</name>
        <dbReference type="ChEBI" id="CHEBI:29105"/>
        <label>1</label>
    </ligand>
</feature>
<feature type="binding site" evidence="4">
    <location>
        <position position="18"/>
    </location>
    <ligand>
        <name>Zn(2+)</name>
        <dbReference type="ChEBI" id="CHEBI:29105"/>
        <label>1</label>
    </ligand>
</feature>
<feature type="binding site" evidence="4">
    <location>
        <position position="30"/>
    </location>
    <ligand>
        <name>Zn(2+)</name>
        <dbReference type="ChEBI" id="CHEBI:29105"/>
        <label>1</label>
    </ligand>
</feature>
<feature type="binding site" evidence="4">
    <location>
        <position position="33"/>
    </location>
    <ligand>
        <name>Zn(2+)</name>
        <dbReference type="ChEBI" id="CHEBI:29105"/>
        <label>1</label>
    </ligand>
</feature>
<feature type="binding site" evidence="3">
    <location>
        <position position="149"/>
    </location>
    <ligand>
        <name>Zn(2+)</name>
        <dbReference type="ChEBI" id="CHEBI:29105"/>
        <label>2</label>
    </ligand>
</feature>
<feature type="binding site" evidence="3">
    <location>
        <position position="152"/>
    </location>
    <ligand>
        <name>Zn(2+)</name>
        <dbReference type="ChEBI" id="CHEBI:29105"/>
        <label>2</label>
    </ligand>
</feature>
<feature type="binding site" evidence="3">
    <location>
        <position position="163"/>
    </location>
    <ligand>
        <name>Zn(2+)</name>
        <dbReference type="ChEBI" id="CHEBI:29105"/>
        <label>3</label>
    </ligand>
</feature>
<feature type="binding site" evidence="3">
    <location>
        <position position="165"/>
    </location>
    <ligand>
        <name>Zn(2+)</name>
        <dbReference type="ChEBI" id="CHEBI:29105"/>
        <label>3</label>
    </ligand>
</feature>
<feature type="binding site" evidence="3">
    <location>
        <position position="170"/>
    </location>
    <ligand>
        <name>Zn(2+)</name>
        <dbReference type="ChEBI" id="CHEBI:29105"/>
        <label>2</label>
    </ligand>
</feature>
<feature type="binding site" evidence="3">
    <location>
        <position position="173"/>
    </location>
    <ligand>
        <name>Zn(2+)</name>
        <dbReference type="ChEBI" id="CHEBI:29105"/>
        <label>2</label>
    </ligand>
</feature>
<feature type="binding site" evidence="3">
    <location>
        <position position="179"/>
    </location>
    <ligand>
        <name>Zn(2+)</name>
        <dbReference type="ChEBI" id="CHEBI:29105"/>
        <label>3</label>
    </ligand>
</feature>
<feature type="binding site" evidence="3">
    <location>
        <position position="181"/>
    </location>
    <ligand>
        <name>Zn(2+)</name>
        <dbReference type="ChEBI" id="CHEBI:29105"/>
        <label>3</label>
    </ligand>
</feature>
<feature type="modified residue" description="Phosphoserine" evidence="11">
    <location>
        <position position="49"/>
    </location>
</feature>
<feature type="modified residue" description="N6-acetyllysine" evidence="2">
    <location>
        <position position="204"/>
    </location>
</feature>
<feature type="splice variant" id="VSP_019652" description="In isoform 2." evidence="9">
    <location>
        <begin position="52"/>
        <end position="63"/>
    </location>
</feature>
<feature type="sequence conflict" description="In Ref. 3; CAB66533 and 5; CAG38507." evidence="10" ref="3 5">
    <original>S</original>
    <variation>P</variation>
    <location>
        <position position="138"/>
    </location>
</feature>
<feature type="sequence conflict" description="In Ref. 2; AAD17528." evidence="10" ref="2">
    <original>E</original>
    <variation>D</variation>
    <location>
        <position position="140"/>
    </location>
</feature>
<feature type="sequence conflict" description="In Ref. 3; CAB66533 and 5; CAG38507." evidence="10" ref="3 5">
    <original>H</original>
    <variation>L</variation>
    <location>
        <position position="179"/>
    </location>
</feature>
<feature type="sequence conflict" description="In Ref. 5; CAG38507." evidence="10" ref="5">
    <original>N</original>
    <variation>D</variation>
    <location>
        <position position="197"/>
    </location>
</feature>
<dbReference type="EMBL" id="AJ251095">
    <property type="protein sequence ID" value="CAC14876.1"/>
    <property type="molecule type" value="mRNA"/>
</dbReference>
<dbReference type="EMBL" id="AF061739">
    <property type="protein sequence ID" value="AAD17528.1"/>
    <property type="status" value="ALT_FRAME"/>
    <property type="molecule type" value="mRNA"/>
</dbReference>
<dbReference type="EMBL" id="AF261138">
    <property type="protein sequence ID" value="AAG44674.1"/>
    <property type="molecule type" value="mRNA"/>
</dbReference>
<dbReference type="EMBL" id="AL136598">
    <property type="protein sequence ID" value="CAB66533.1"/>
    <property type="molecule type" value="mRNA"/>
</dbReference>
<dbReference type="EMBL" id="CR533476">
    <property type="protein sequence ID" value="CAG38507.1"/>
    <property type="molecule type" value="mRNA"/>
</dbReference>
<dbReference type="EMBL" id="CH471136">
    <property type="protein sequence ID" value="EAW99122.1"/>
    <property type="molecule type" value="Genomic_DNA"/>
</dbReference>
<dbReference type="EMBL" id="CH471136">
    <property type="protein sequence ID" value="EAW99123.1"/>
    <property type="molecule type" value="Genomic_DNA"/>
</dbReference>
<dbReference type="EMBL" id="CH471136">
    <property type="protein sequence ID" value="EAW99124.1"/>
    <property type="molecule type" value="Genomic_DNA"/>
</dbReference>
<dbReference type="EMBL" id="CH471136">
    <property type="protein sequence ID" value="EAW99125.1"/>
    <property type="molecule type" value="Genomic_DNA"/>
</dbReference>
<dbReference type="EMBL" id="CH471136">
    <property type="protein sequence ID" value="EAW99127.1"/>
    <property type="molecule type" value="Genomic_DNA"/>
</dbReference>
<dbReference type="EMBL" id="BC005283">
    <property type="protein sequence ID" value="AAH05283.1"/>
    <property type="molecule type" value="mRNA"/>
</dbReference>
<dbReference type="CCDS" id="CCDS10313.1">
    <molecule id="Q6FIF0-1"/>
</dbReference>
<dbReference type="CCDS" id="CCDS58395.1">
    <molecule id="Q6FIF0-2"/>
</dbReference>
<dbReference type="RefSeq" id="NP_001229840.1">
    <molecule id="Q6FIF0-1"/>
    <property type="nucleotide sequence ID" value="NM_001242911.2"/>
</dbReference>
<dbReference type="RefSeq" id="NP_001229841.1">
    <molecule id="Q6FIF0-1"/>
    <property type="nucleotide sequence ID" value="NM_001242912.2"/>
</dbReference>
<dbReference type="RefSeq" id="NP_001229842.1">
    <molecule id="Q6FIF0-1"/>
    <property type="nucleotide sequence ID" value="NM_001242913.2"/>
</dbReference>
<dbReference type="RefSeq" id="NP_001229843.1">
    <molecule id="Q6FIF0-1"/>
    <property type="nucleotide sequence ID" value="NM_001242914.2"/>
</dbReference>
<dbReference type="RefSeq" id="NP_001229844.1">
    <molecule id="Q6FIF0-1"/>
    <property type="nucleotide sequence ID" value="NM_001242915.2"/>
</dbReference>
<dbReference type="RefSeq" id="NP_001229845.1">
    <molecule id="Q6FIF0-1"/>
    <property type="nucleotide sequence ID" value="NM_001242916.2"/>
</dbReference>
<dbReference type="RefSeq" id="NP_001229846.1">
    <molecule id="Q6FIF0-2"/>
    <property type="nucleotide sequence ID" value="NM_001242917.2"/>
</dbReference>
<dbReference type="RefSeq" id="NP_061879.2">
    <molecule id="Q6FIF0-1"/>
    <property type="nucleotide sequence ID" value="NM_019006.3"/>
</dbReference>
<dbReference type="RefSeq" id="XP_011519986.1">
    <molecule id="Q6FIF0-1"/>
    <property type="nucleotide sequence ID" value="XM_011521684.3"/>
</dbReference>
<dbReference type="RefSeq" id="XP_024305724.1">
    <molecule id="Q6FIF0-1"/>
    <property type="nucleotide sequence ID" value="XM_024449956.2"/>
</dbReference>
<dbReference type="RefSeq" id="XP_024305727.1">
    <molecule id="Q6FIF0-1"/>
    <property type="nucleotide sequence ID" value="XM_024449959.2"/>
</dbReference>
<dbReference type="RefSeq" id="XP_024305731.1">
    <molecule id="Q6FIF0-1"/>
    <property type="nucleotide sequence ID" value="XM_024449963.2"/>
</dbReference>
<dbReference type="RefSeq" id="XP_047288650.1">
    <molecule id="Q6FIF0-1"/>
    <property type="nucleotide sequence ID" value="XM_047432694.1"/>
</dbReference>
<dbReference type="RefSeq" id="XP_047288651.1">
    <molecule id="Q6FIF0-1"/>
    <property type="nucleotide sequence ID" value="XM_047432695.1"/>
</dbReference>
<dbReference type="RefSeq" id="XP_047288652.1">
    <molecule id="Q6FIF0-1"/>
    <property type="nucleotide sequence ID" value="XM_047432696.1"/>
</dbReference>
<dbReference type="RefSeq" id="XP_047288653.1">
    <molecule id="Q6FIF0-1"/>
    <property type="nucleotide sequence ID" value="XM_047432697.1"/>
</dbReference>
<dbReference type="RefSeq" id="XP_054234197.1">
    <molecule id="Q6FIF0-1"/>
    <property type="nucleotide sequence ID" value="XM_054378222.1"/>
</dbReference>
<dbReference type="RefSeq" id="XP_054234198.1">
    <molecule id="Q6FIF0-1"/>
    <property type="nucleotide sequence ID" value="XM_054378223.1"/>
</dbReference>
<dbReference type="RefSeq" id="XP_054234199.1">
    <molecule id="Q6FIF0-1"/>
    <property type="nucleotide sequence ID" value="XM_054378224.1"/>
</dbReference>
<dbReference type="RefSeq" id="XP_054234200.1">
    <molecule id="Q6FIF0-1"/>
    <property type="nucleotide sequence ID" value="XM_054378225.1"/>
</dbReference>
<dbReference type="RefSeq" id="XP_054234201.1">
    <molecule id="Q6FIF0-1"/>
    <property type="nucleotide sequence ID" value="XM_054378226.1"/>
</dbReference>
<dbReference type="SMR" id="Q6FIF0"/>
<dbReference type="BioGRID" id="119975">
    <property type="interactions" value="23"/>
</dbReference>
<dbReference type="FunCoup" id="Q6FIF0">
    <property type="interactions" value="583"/>
</dbReference>
<dbReference type="IntAct" id="Q6FIF0">
    <property type="interactions" value="6"/>
</dbReference>
<dbReference type="STRING" id="9606.ENSP00000479071"/>
<dbReference type="iPTMnet" id="Q6FIF0"/>
<dbReference type="PhosphoSitePlus" id="Q6FIF0"/>
<dbReference type="BioMuta" id="ZFAND6"/>
<dbReference type="DMDM" id="110288083"/>
<dbReference type="jPOST" id="Q6FIF0"/>
<dbReference type="MassIVE" id="Q6FIF0"/>
<dbReference type="PaxDb" id="9606-ENSP00000261749"/>
<dbReference type="PeptideAtlas" id="Q6FIF0"/>
<dbReference type="ProteomicsDB" id="66298">
    <molecule id="Q6FIF0-1"/>
</dbReference>
<dbReference type="ProteomicsDB" id="66299">
    <molecule id="Q6FIF0-2"/>
</dbReference>
<dbReference type="Pumba" id="Q6FIF0"/>
<dbReference type="TopDownProteomics" id="Q6FIF0-1">
    <molecule id="Q6FIF0-1"/>
</dbReference>
<dbReference type="Antibodypedia" id="15226">
    <property type="antibodies" value="105 antibodies from 18 providers"/>
</dbReference>
<dbReference type="CPTC" id="Q6FIF0">
    <property type="antibodies" value="3 antibodies"/>
</dbReference>
<dbReference type="DNASU" id="54469"/>
<dbReference type="Ensembl" id="ENST00000261749.11">
    <molecule id="Q6FIF0-1"/>
    <property type="protein sequence ID" value="ENSP00000261749.6"/>
    <property type="gene ID" value="ENSG00000086666.20"/>
</dbReference>
<dbReference type="Ensembl" id="ENST00000558087.5">
    <molecule id="Q6FIF0-1"/>
    <property type="protein sequence ID" value="ENSP00000453888.1"/>
    <property type="gene ID" value="ENSG00000086666.20"/>
</dbReference>
<dbReference type="Ensembl" id="ENST00000558494.5">
    <molecule id="Q6FIF0-1"/>
    <property type="protein sequence ID" value="ENSP00000454137.1"/>
    <property type="gene ID" value="ENSG00000086666.20"/>
</dbReference>
<dbReference type="Ensembl" id="ENST00000559157.6">
    <molecule id="Q6FIF0-2"/>
    <property type="protein sequence ID" value="ENSP00000454152.1"/>
    <property type="gene ID" value="ENSG00000086666.20"/>
</dbReference>
<dbReference type="Ensembl" id="ENST00000559775.5">
    <molecule id="Q6FIF0-1"/>
    <property type="protein sequence ID" value="ENSP00000453709.1"/>
    <property type="gene ID" value="ENSG00000086666.20"/>
</dbReference>
<dbReference type="Ensembl" id="ENST00000559835.5">
    <molecule id="Q6FIF0-1"/>
    <property type="protein sequence ID" value="ENSP00000453291.1"/>
    <property type="gene ID" value="ENSG00000086666.20"/>
</dbReference>
<dbReference type="Ensembl" id="ENST00000561060.5">
    <molecule id="Q6FIF0-1"/>
    <property type="protein sequence ID" value="ENSP00000452735.1"/>
    <property type="gene ID" value="ENSG00000086666.20"/>
</dbReference>
<dbReference type="Ensembl" id="ENST00000613266.4">
    <molecule id="Q6FIF0-1"/>
    <property type="protein sequence ID" value="ENSP00000479071.1"/>
    <property type="gene ID" value="ENSG00000086666.20"/>
</dbReference>
<dbReference type="Ensembl" id="ENST00000616533.4">
    <molecule id="Q6FIF0-1"/>
    <property type="protein sequence ID" value="ENSP00000478129.1"/>
    <property type="gene ID" value="ENSG00000086666.20"/>
</dbReference>
<dbReference type="Ensembl" id="ENST00000618205.4">
    <molecule id="Q6FIF0-1"/>
    <property type="protein sequence ID" value="ENSP00000484971.1"/>
    <property type="gene ID" value="ENSG00000086666.20"/>
</dbReference>
<dbReference type="GeneID" id="54469"/>
<dbReference type="KEGG" id="hsa:54469"/>
<dbReference type="MANE-Select" id="ENST00000261749.11">
    <property type="protein sequence ID" value="ENSP00000261749.6"/>
    <property type="RefSeq nucleotide sequence ID" value="NM_019006.4"/>
    <property type="RefSeq protein sequence ID" value="NP_061879.2"/>
</dbReference>
<dbReference type="UCSC" id="uc002bfe.2">
    <molecule id="Q6FIF0-1"/>
    <property type="organism name" value="human"/>
</dbReference>
<dbReference type="AGR" id="HGNC:30164"/>
<dbReference type="CTD" id="54469"/>
<dbReference type="DisGeNET" id="54469"/>
<dbReference type="GeneCards" id="ZFAND6"/>
<dbReference type="HGNC" id="HGNC:30164">
    <property type="gene designation" value="ZFAND6"/>
</dbReference>
<dbReference type="HPA" id="ENSG00000086666">
    <property type="expression patterns" value="Low tissue specificity"/>
</dbReference>
<dbReference type="MIM" id="610183">
    <property type="type" value="gene"/>
</dbReference>
<dbReference type="neXtProt" id="NX_Q6FIF0"/>
<dbReference type="OpenTargets" id="ENSG00000086666"/>
<dbReference type="PharmGKB" id="PA134883256"/>
<dbReference type="VEuPathDB" id="HostDB:ENSG00000086666"/>
<dbReference type="eggNOG" id="KOG3173">
    <property type="taxonomic scope" value="Eukaryota"/>
</dbReference>
<dbReference type="GeneTree" id="ENSGT00940000160833"/>
<dbReference type="HOGENOM" id="CLU_057016_1_0_1"/>
<dbReference type="InParanoid" id="Q6FIF0"/>
<dbReference type="OMA" id="YCAMHRY"/>
<dbReference type="OrthoDB" id="428577at2759"/>
<dbReference type="PAN-GO" id="Q6FIF0">
    <property type="GO annotations" value="2 GO annotations based on evolutionary models"/>
</dbReference>
<dbReference type="PhylomeDB" id="Q6FIF0"/>
<dbReference type="TreeFam" id="TF313612"/>
<dbReference type="PathwayCommons" id="Q6FIF0"/>
<dbReference type="Reactome" id="R-HSA-9033241">
    <property type="pathway name" value="Peroxisomal protein import"/>
</dbReference>
<dbReference type="SignaLink" id="Q6FIF0"/>
<dbReference type="BioGRID-ORCS" id="54469">
    <property type="hits" value="19 hits in 1159 CRISPR screens"/>
</dbReference>
<dbReference type="ChiTaRS" id="ZFAND6">
    <property type="organism name" value="human"/>
</dbReference>
<dbReference type="GenomeRNAi" id="54469"/>
<dbReference type="Pharos" id="Q6FIF0">
    <property type="development level" value="Tbio"/>
</dbReference>
<dbReference type="PRO" id="PR:Q6FIF0"/>
<dbReference type="Proteomes" id="UP000005640">
    <property type="component" value="Chromosome 15"/>
</dbReference>
<dbReference type="RNAct" id="Q6FIF0">
    <property type="molecule type" value="protein"/>
</dbReference>
<dbReference type="Bgee" id="ENSG00000086666">
    <property type="expression patterns" value="Expressed in primordial germ cell in gonad and 106 other cell types or tissues"/>
</dbReference>
<dbReference type="ExpressionAtlas" id="Q6FIF0">
    <property type="expression patterns" value="baseline and differential"/>
</dbReference>
<dbReference type="GO" id="GO:0005829">
    <property type="term" value="C:cytosol"/>
    <property type="evidence" value="ECO:0000304"/>
    <property type="project" value="Reactome"/>
</dbReference>
<dbReference type="GO" id="GO:0003677">
    <property type="term" value="F:DNA binding"/>
    <property type="evidence" value="ECO:0007669"/>
    <property type="project" value="InterPro"/>
</dbReference>
<dbReference type="GO" id="GO:0031593">
    <property type="term" value="F:polyubiquitin modification-dependent protein binding"/>
    <property type="evidence" value="ECO:0000250"/>
    <property type="project" value="UniProtKB"/>
</dbReference>
<dbReference type="GO" id="GO:0008270">
    <property type="term" value="F:zinc ion binding"/>
    <property type="evidence" value="ECO:0007669"/>
    <property type="project" value="UniProtKB-KW"/>
</dbReference>
<dbReference type="GO" id="GO:0006915">
    <property type="term" value="P:apoptotic process"/>
    <property type="evidence" value="ECO:0007669"/>
    <property type="project" value="UniProtKB-KW"/>
</dbReference>
<dbReference type="GO" id="GO:0071356">
    <property type="term" value="P:cellular response to tumor necrosis factor"/>
    <property type="evidence" value="ECO:0000315"/>
    <property type="project" value="UniProtKB"/>
</dbReference>
<dbReference type="GO" id="GO:0043066">
    <property type="term" value="P:negative regulation of apoptotic process"/>
    <property type="evidence" value="ECO:0000315"/>
    <property type="project" value="UniProtKB"/>
</dbReference>
<dbReference type="GO" id="GO:0006625">
    <property type="term" value="P:protein targeting to peroxisome"/>
    <property type="evidence" value="ECO:0000250"/>
    <property type="project" value="UniProtKB"/>
</dbReference>
<dbReference type="GO" id="GO:0015031">
    <property type="term" value="P:protein transport"/>
    <property type="evidence" value="ECO:0007669"/>
    <property type="project" value="UniProtKB-KW"/>
</dbReference>
<dbReference type="GO" id="GO:0043122">
    <property type="term" value="P:regulation of canonical NF-kappaB signal transduction"/>
    <property type="evidence" value="ECO:0000315"/>
    <property type="project" value="UniProtKB"/>
</dbReference>
<dbReference type="FunFam" id="1.20.5.4770:FF:000001">
    <property type="entry name" value="Zinc finger AN1-type containing 6"/>
    <property type="match status" value="1"/>
</dbReference>
<dbReference type="FunFam" id="4.10.1110.10:FF:000001">
    <property type="entry name" value="Zinc finger AN1-type containing 6"/>
    <property type="match status" value="1"/>
</dbReference>
<dbReference type="Gene3D" id="1.20.5.4770">
    <property type="match status" value="1"/>
</dbReference>
<dbReference type="Gene3D" id="4.10.1110.10">
    <property type="entry name" value="AN1-like Zinc finger"/>
    <property type="match status" value="1"/>
</dbReference>
<dbReference type="InterPro" id="IPR035896">
    <property type="entry name" value="AN1-like_Znf"/>
</dbReference>
<dbReference type="InterPro" id="IPR050652">
    <property type="entry name" value="AN1_A20_ZnFinger"/>
</dbReference>
<dbReference type="InterPro" id="IPR002653">
    <property type="entry name" value="Znf_A20"/>
</dbReference>
<dbReference type="InterPro" id="IPR000058">
    <property type="entry name" value="Znf_AN1"/>
</dbReference>
<dbReference type="PANTHER" id="PTHR10634">
    <property type="entry name" value="AN1-TYPE ZINC FINGER PROTEIN"/>
    <property type="match status" value="1"/>
</dbReference>
<dbReference type="PANTHER" id="PTHR10634:SF25">
    <property type="entry name" value="AN1-TYPE ZINC FINGER PROTEIN 6"/>
    <property type="match status" value="1"/>
</dbReference>
<dbReference type="Pfam" id="PF01754">
    <property type="entry name" value="zf-A20"/>
    <property type="match status" value="1"/>
</dbReference>
<dbReference type="Pfam" id="PF01428">
    <property type="entry name" value="zf-AN1"/>
    <property type="match status" value="1"/>
</dbReference>
<dbReference type="SMART" id="SM00259">
    <property type="entry name" value="ZnF_A20"/>
    <property type="match status" value="1"/>
</dbReference>
<dbReference type="SMART" id="SM00154">
    <property type="entry name" value="ZnF_AN1"/>
    <property type="match status" value="1"/>
</dbReference>
<dbReference type="SUPFAM" id="SSF118310">
    <property type="entry name" value="AN1-like Zinc finger"/>
    <property type="match status" value="1"/>
</dbReference>
<dbReference type="SUPFAM" id="SSF57716">
    <property type="entry name" value="Glucocorticoid receptor-like (DNA-binding domain)"/>
    <property type="match status" value="1"/>
</dbReference>
<dbReference type="PROSITE" id="PS51036">
    <property type="entry name" value="ZF_A20"/>
    <property type="match status" value="1"/>
</dbReference>
<dbReference type="PROSITE" id="PS51039">
    <property type="entry name" value="ZF_AN1"/>
    <property type="match status" value="1"/>
</dbReference>